<sequence>MELLDIWNWIQQNGILTAVITGIVALLFNQRQKSIERFYSQSGETLEKILEPMYYSLKEIKNEEDENHKMVLIEKFFEEYSGKKGKLSKLRNILLIDQILNTEDCFREYILNKNSENRKKLFYKMRMLDQAVNKEYRSIFVTLNKNYNWYKVLFRTNYILSAVFVFVRWFKETLAFFVGASAFAFIPLLYDKYLGEQVLGNWLEVNKLIFGLSCSALYIFWIIHYFLLKDTMQRKDEISLFQEWFDKTKLGKWTNKNVWGKIGNWNVERRARRVRNDEDV</sequence>
<evidence type="ECO:0000255" key="1"/>
<evidence type="ECO:0000305" key="2"/>
<comment type="subcellular location">
    <subcellularLocation>
        <location evidence="2">Cell membrane</location>
        <topology evidence="2">Multi-pass membrane protein</topology>
    </subcellularLocation>
</comment>
<dbReference type="EMBL" id="AF027868">
    <property type="protein sequence ID" value="AAB84462.1"/>
    <property type="molecule type" value="Genomic_DNA"/>
</dbReference>
<dbReference type="EMBL" id="AL009126">
    <property type="protein sequence ID" value="CAB13790.1"/>
    <property type="molecule type" value="Genomic_DNA"/>
</dbReference>
<dbReference type="PIR" id="A69899">
    <property type="entry name" value="A69899"/>
</dbReference>
<dbReference type="RefSeq" id="NP_389779.1">
    <property type="nucleotide sequence ID" value="NC_000964.3"/>
</dbReference>
<dbReference type="RefSeq" id="WP_003231327.1">
    <property type="nucleotide sequence ID" value="NZ_OZ025638.1"/>
</dbReference>
<dbReference type="SMR" id="O34774"/>
<dbReference type="FunCoup" id="O34774">
    <property type="interactions" value="51"/>
</dbReference>
<dbReference type="STRING" id="224308.BSU18980"/>
<dbReference type="PaxDb" id="224308-BSU18980"/>
<dbReference type="EnsemblBacteria" id="CAB13790">
    <property type="protein sequence ID" value="CAB13790"/>
    <property type="gene ID" value="BSU_18980"/>
</dbReference>
<dbReference type="GeneID" id="939633"/>
<dbReference type="KEGG" id="bsu:BSU18980"/>
<dbReference type="PATRIC" id="fig|224308.179.peg.2076"/>
<dbReference type="eggNOG" id="ENOG502ZTSG">
    <property type="taxonomic scope" value="Bacteria"/>
</dbReference>
<dbReference type="InParanoid" id="O34774"/>
<dbReference type="OrthoDB" id="9862013at2"/>
<dbReference type="BioCyc" id="BSUB:BSU18980-MONOMER"/>
<dbReference type="Proteomes" id="UP000001570">
    <property type="component" value="Chromosome"/>
</dbReference>
<dbReference type="GO" id="GO:0005886">
    <property type="term" value="C:plasma membrane"/>
    <property type="evidence" value="ECO:0007669"/>
    <property type="project" value="UniProtKB-SubCell"/>
</dbReference>
<accession>O34774</accession>
<organism>
    <name type="scientific">Bacillus subtilis (strain 168)</name>
    <dbReference type="NCBI Taxonomy" id="224308"/>
    <lineage>
        <taxon>Bacteria</taxon>
        <taxon>Bacillati</taxon>
        <taxon>Bacillota</taxon>
        <taxon>Bacilli</taxon>
        <taxon>Bacillales</taxon>
        <taxon>Bacillaceae</taxon>
        <taxon>Bacillus</taxon>
    </lineage>
</organism>
<reference key="1">
    <citation type="submission" date="1997-11" db="EMBL/GenBank/DDBJ databases">
        <title>Sequence analysis of the Bacillus subtilis chromosome region between the terC and odhAB loci cloned in a yeast artificial chromosome.</title>
        <authorList>
            <person name="Lapidus A."/>
            <person name="Galleron N."/>
            <person name="Sorokin A."/>
            <person name="Ehrlich S.D."/>
        </authorList>
    </citation>
    <scope>NUCLEOTIDE SEQUENCE [GENOMIC DNA]</scope>
</reference>
<reference key="2">
    <citation type="journal article" date="1997" name="Nature">
        <title>The complete genome sequence of the Gram-positive bacterium Bacillus subtilis.</title>
        <authorList>
            <person name="Kunst F."/>
            <person name="Ogasawara N."/>
            <person name="Moszer I."/>
            <person name="Albertini A.M."/>
            <person name="Alloni G."/>
            <person name="Azevedo V."/>
            <person name="Bertero M.G."/>
            <person name="Bessieres P."/>
            <person name="Bolotin A."/>
            <person name="Borchert S."/>
            <person name="Borriss R."/>
            <person name="Boursier L."/>
            <person name="Brans A."/>
            <person name="Braun M."/>
            <person name="Brignell S.C."/>
            <person name="Bron S."/>
            <person name="Brouillet S."/>
            <person name="Bruschi C.V."/>
            <person name="Caldwell B."/>
            <person name="Capuano V."/>
            <person name="Carter N.M."/>
            <person name="Choi S.-K."/>
            <person name="Codani J.-J."/>
            <person name="Connerton I.F."/>
            <person name="Cummings N.J."/>
            <person name="Daniel R.A."/>
            <person name="Denizot F."/>
            <person name="Devine K.M."/>
            <person name="Duesterhoeft A."/>
            <person name="Ehrlich S.D."/>
            <person name="Emmerson P.T."/>
            <person name="Entian K.-D."/>
            <person name="Errington J."/>
            <person name="Fabret C."/>
            <person name="Ferrari E."/>
            <person name="Foulger D."/>
            <person name="Fritz C."/>
            <person name="Fujita M."/>
            <person name="Fujita Y."/>
            <person name="Fuma S."/>
            <person name="Galizzi A."/>
            <person name="Galleron N."/>
            <person name="Ghim S.-Y."/>
            <person name="Glaser P."/>
            <person name="Goffeau A."/>
            <person name="Golightly E.J."/>
            <person name="Grandi G."/>
            <person name="Guiseppi G."/>
            <person name="Guy B.J."/>
            <person name="Haga K."/>
            <person name="Haiech J."/>
            <person name="Harwood C.R."/>
            <person name="Henaut A."/>
            <person name="Hilbert H."/>
            <person name="Holsappel S."/>
            <person name="Hosono S."/>
            <person name="Hullo M.-F."/>
            <person name="Itaya M."/>
            <person name="Jones L.-M."/>
            <person name="Joris B."/>
            <person name="Karamata D."/>
            <person name="Kasahara Y."/>
            <person name="Klaerr-Blanchard M."/>
            <person name="Klein C."/>
            <person name="Kobayashi Y."/>
            <person name="Koetter P."/>
            <person name="Koningstein G."/>
            <person name="Krogh S."/>
            <person name="Kumano M."/>
            <person name="Kurita K."/>
            <person name="Lapidus A."/>
            <person name="Lardinois S."/>
            <person name="Lauber J."/>
            <person name="Lazarevic V."/>
            <person name="Lee S.-M."/>
            <person name="Levine A."/>
            <person name="Liu H."/>
            <person name="Masuda S."/>
            <person name="Mauel C."/>
            <person name="Medigue C."/>
            <person name="Medina N."/>
            <person name="Mellado R.P."/>
            <person name="Mizuno M."/>
            <person name="Moestl D."/>
            <person name="Nakai S."/>
            <person name="Noback M."/>
            <person name="Noone D."/>
            <person name="O'Reilly M."/>
            <person name="Ogawa K."/>
            <person name="Ogiwara A."/>
            <person name="Oudega B."/>
            <person name="Park S.-H."/>
            <person name="Parro V."/>
            <person name="Pohl T.M."/>
            <person name="Portetelle D."/>
            <person name="Porwollik S."/>
            <person name="Prescott A.M."/>
            <person name="Presecan E."/>
            <person name="Pujic P."/>
            <person name="Purnelle B."/>
            <person name="Rapoport G."/>
            <person name="Rey M."/>
            <person name="Reynolds S."/>
            <person name="Rieger M."/>
            <person name="Rivolta C."/>
            <person name="Rocha E."/>
            <person name="Roche B."/>
            <person name="Rose M."/>
            <person name="Sadaie Y."/>
            <person name="Sato T."/>
            <person name="Scanlan E."/>
            <person name="Schleich S."/>
            <person name="Schroeter R."/>
            <person name="Scoffone F."/>
            <person name="Sekiguchi J."/>
            <person name="Sekowska A."/>
            <person name="Seror S.J."/>
            <person name="Serror P."/>
            <person name="Shin B.-S."/>
            <person name="Soldo B."/>
            <person name="Sorokin A."/>
            <person name="Tacconi E."/>
            <person name="Takagi T."/>
            <person name="Takahashi H."/>
            <person name="Takemaru K."/>
            <person name="Takeuchi M."/>
            <person name="Tamakoshi A."/>
            <person name="Tanaka T."/>
            <person name="Terpstra P."/>
            <person name="Tognoni A."/>
            <person name="Tosato V."/>
            <person name="Uchiyama S."/>
            <person name="Vandenbol M."/>
            <person name="Vannier F."/>
            <person name="Vassarotti A."/>
            <person name="Viari A."/>
            <person name="Wambutt R."/>
            <person name="Wedler E."/>
            <person name="Wedler H."/>
            <person name="Weitzenegger T."/>
            <person name="Winters P."/>
            <person name="Wipat A."/>
            <person name="Yamamoto H."/>
            <person name="Yamane K."/>
            <person name="Yasumoto K."/>
            <person name="Yata K."/>
            <person name="Yoshida K."/>
            <person name="Yoshikawa H.-F."/>
            <person name="Zumstein E."/>
            <person name="Yoshikawa H."/>
            <person name="Danchin A."/>
        </authorList>
    </citation>
    <scope>NUCLEOTIDE SEQUENCE [LARGE SCALE GENOMIC DNA]</scope>
    <source>
        <strain>168</strain>
    </source>
</reference>
<keyword id="KW-1003">Cell membrane</keyword>
<keyword id="KW-0472">Membrane</keyword>
<keyword id="KW-1185">Reference proteome</keyword>
<keyword id="KW-0812">Transmembrane</keyword>
<keyword id="KW-1133">Transmembrane helix</keyword>
<protein>
    <recommendedName>
        <fullName>Uncharacterized protein YobJ</fullName>
    </recommendedName>
</protein>
<gene>
    <name type="primary">yobJ</name>
    <name type="ordered locus">BSU18980</name>
</gene>
<feature type="chain" id="PRO_0000049653" description="Uncharacterized protein YobJ">
    <location>
        <begin position="1"/>
        <end position="280"/>
    </location>
</feature>
<feature type="transmembrane region" description="Helical" evidence="1">
    <location>
        <begin position="10"/>
        <end position="29"/>
    </location>
</feature>
<feature type="transmembrane region" description="Helical" evidence="1">
    <location>
        <begin position="164"/>
        <end position="186"/>
    </location>
</feature>
<feature type="transmembrane region" description="Helical" evidence="1">
    <location>
        <begin position="209"/>
        <end position="228"/>
    </location>
</feature>
<proteinExistence type="predicted"/>
<name>YOBJ_BACSU</name>